<accession>Q14HS5</accession>
<proteinExistence type="inferred from homology"/>
<feature type="chain" id="PRO_0000366757" description="Ribosomal RNA large subunit methyltransferase K/L">
    <location>
        <begin position="1"/>
        <end position="717"/>
    </location>
</feature>
<feature type="domain" description="THUMP" evidence="1">
    <location>
        <begin position="44"/>
        <end position="155"/>
    </location>
</feature>
<gene>
    <name evidence="1" type="primary">rlmL</name>
    <name type="ordered locus">FTF0923</name>
</gene>
<name>RLMKL_FRAT1</name>
<comment type="function">
    <text evidence="1">Specifically methylates the guanine in position 2445 (m2G2445) and the guanine in position 2069 (m7G2069) of 23S rRNA.</text>
</comment>
<comment type="catalytic activity">
    <reaction evidence="1">
        <text>guanosine(2445) in 23S rRNA + S-adenosyl-L-methionine = N(2)-methylguanosine(2445) in 23S rRNA + S-adenosyl-L-homocysteine + H(+)</text>
        <dbReference type="Rhea" id="RHEA:42740"/>
        <dbReference type="Rhea" id="RHEA-COMP:10215"/>
        <dbReference type="Rhea" id="RHEA-COMP:10216"/>
        <dbReference type="ChEBI" id="CHEBI:15378"/>
        <dbReference type="ChEBI" id="CHEBI:57856"/>
        <dbReference type="ChEBI" id="CHEBI:59789"/>
        <dbReference type="ChEBI" id="CHEBI:74269"/>
        <dbReference type="ChEBI" id="CHEBI:74481"/>
        <dbReference type="EC" id="2.1.1.173"/>
    </reaction>
</comment>
<comment type="catalytic activity">
    <reaction evidence="1">
        <text>guanosine(2069) in 23S rRNA + S-adenosyl-L-methionine = N(2)-methylguanosine(2069) in 23S rRNA + S-adenosyl-L-homocysteine + H(+)</text>
        <dbReference type="Rhea" id="RHEA:43772"/>
        <dbReference type="Rhea" id="RHEA-COMP:10688"/>
        <dbReference type="Rhea" id="RHEA-COMP:10689"/>
        <dbReference type="ChEBI" id="CHEBI:15378"/>
        <dbReference type="ChEBI" id="CHEBI:57856"/>
        <dbReference type="ChEBI" id="CHEBI:59789"/>
        <dbReference type="ChEBI" id="CHEBI:74269"/>
        <dbReference type="ChEBI" id="CHEBI:74481"/>
        <dbReference type="EC" id="2.1.1.264"/>
    </reaction>
</comment>
<comment type="subcellular location">
    <subcellularLocation>
        <location evidence="1">Cytoplasm</location>
    </subcellularLocation>
</comment>
<comment type="similarity">
    <text evidence="1">Belongs to the methyltransferase superfamily. RlmKL family.</text>
</comment>
<organism>
    <name type="scientific">Francisella tularensis subsp. tularensis (strain FSC 198)</name>
    <dbReference type="NCBI Taxonomy" id="393115"/>
    <lineage>
        <taxon>Bacteria</taxon>
        <taxon>Pseudomonadati</taxon>
        <taxon>Pseudomonadota</taxon>
        <taxon>Gammaproteobacteria</taxon>
        <taxon>Thiotrichales</taxon>
        <taxon>Francisellaceae</taxon>
        <taxon>Francisella</taxon>
    </lineage>
</organism>
<protein>
    <recommendedName>
        <fullName evidence="1">Ribosomal RNA large subunit methyltransferase K/L</fullName>
    </recommendedName>
    <domain>
        <recommendedName>
            <fullName evidence="1">23S rRNA m2G2445 methyltransferase</fullName>
            <ecNumber evidence="1">2.1.1.173</ecNumber>
        </recommendedName>
        <alternativeName>
            <fullName evidence="1">rRNA (guanine-N(2)-)-methyltransferase RlmL</fullName>
        </alternativeName>
    </domain>
    <domain>
        <recommendedName>
            <fullName evidence="1">23S rRNA m7G2069 methyltransferase</fullName>
            <ecNumber evidence="1">2.1.1.264</ecNumber>
        </recommendedName>
        <alternativeName>
            <fullName evidence="1">rRNA (guanine-N(7)-)-methyltransferase RlmK</fullName>
        </alternativeName>
    </domain>
</protein>
<keyword id="KW-0963">Cytoplasm</keyword>
<keyword id="KW-0489">Methyltransferase</keyword>
<keyword id="KW-0694">RNA-binding</keyword>
<keyword id="KW-0698">rRNA processing</keyword>
<keyword id="KW-0949">S-adenosyl-L-methionine</keyword>
<keyword id="KW-0808">Transferase</keyword>
<dbReference type="EC" id="2.1.1.173" evidence="1"/>
<dbReference type="EC" id="2.1.1.264" evidence="1"/>
<dbReference type="EMBL" id="AM286280">
    <property type="protein sequence ID" value="CAL08939.1"/>
    <property type="molecule type" value="Genomic_DNA"/>
</dbReference>
<dbReference type="SMR" id="Q14HS5"/>
<dbReference type="KEGG" id="ftf:FTF0923"/>
<dbReference type="HOGENOM" id="CLU_014042_2_0_6"/>
<dbReference type="GO" id="GO:0005737">
    <property type="term" value="C:cytoplasm"/>
    <property type="evidence" value="ECO:0007669"/>
    <property type="project" value="UniProtKB-SubCell"/>
</dbReference>
<dbReference type="GO" id="GO:0052915">
    <property type="term" value="F:23S rRNA (guanine(2445)-N(2))-methyltransferase activity"/>
    <property type="evidence" value="ECO:0007669"/>
    <property type="project" value="UniProtKB-UniRule"/>
</dbReference>
<dbReference type="GO" id="GO:0003723">
    <property type="term" value="F:RNA binding"/>
    <property type="evidence" value="ECO:0007669"/>
    <property type="project" value="UniProtKB-KW"/>
</dbReference>
<dbReference type="GO" id="GO:0070043">
    <property type="term" value="F:rRNA (guanine-N7-)-methyltransferase activity"/>
    <property type="evidence" value="ECO:0007669"/>
    <property type="project" value="UniProtKB-UniRule"/>
</dbReference>
<dbReference type="CDD" id="cd02440">
    <property type="entry name" value="AdoMet_MTases"/>
    <property type="match status" value="1"/>
</dbReference>
<dbReference type="CDD" id="cd11715">
    <property type="entry name" value="THUMP_AdoMetMT"/>
    <property type="match status" value="1"/>
</dbReference>
<dbReference type="Gene3D" id="3.30.2130.30">
    <property type="match status" value="1"/>
</dbReference>
<dbReference type="Gene3D" id="3.30.750.80">
    <property type="entry name" value="RNA methyltransferase domain (HRMD) like"/>
    <property type="match status" value="1"/>
</dbReference>
<dbReference type="Gene3D" id="3.40.50.150">
    <property type="entry name" value="Vaccinia Virus protein VP39"/>
    <property type="match status" value="2"/>
</dbReference>
<dbReference type="HAMAP" id="MF_01858">
    <property type="entry name" value="23SrRNA_methyltr_KL"/>
    <property type="match status" value="1"/>
</dbReference>
<dbReference type="InterPro" id="IPR017244">
    <property type="entry name" value="23SrRNA_methyltr_KL"/>
</dbReference>
<dbReference type="InterPro" id="IPR002052">
    <property type="entry name" value="DNA_methylase_N6_adenine_CS"/>
</dbReference>
<dbReference type="InterPro" id="IPR000241">
    <property type="entry name" value="RlmKL-like_Mtase"/>
</dbReference>
<dbReference type="InterPro" id="IPR053943">
    <property type="entry name" value="RlmKL-like_Mtase_CS"/>
</dbReference>
<dbReference type="InterPro" id="IPR054170">
    <property type="entry name" value="RlmL_1st"/>
</dbReference>
<dbReference type="InterPro" id="IPR019614">
    <property type="entry name" value="SAM-dep_methyl-trfase"/>
</dbReference>
<dbReference type="InterPro" id="IPR029063">
    <property type="entry name" value="SAM-dependent_MTases_sf"/>
</dbReference>
<dbReference type="InterPro" id="IPR004114">
    <property type="entry name" value="THUMP_dom"/>
</dbReference>
<dbReference type="NCBIfam" id="NF008748">
    <property type="entry name" value="PRK11783.1"/>
    <property type="match status" value="1"/>
</dbReference>
<dbReference type="PANTHER" id="PTHR47313">
    <property type="entry name" value="RIBOSOMAL RNA LARGE SUBUNIT METHYLTRANSFERASE K/L"/>
    <property type="match status" value="1"/>
</dbReference>
<dbReference type="PANTHER" id="PTHR47313:SF1">
    <property type="entry name" value="RIBOSOMAL RNA LARGE SUBUNIT METHYLTRANSFERASE K_L"/>
    <property type="match status" value="1"/>
</dbReference>
<dbReference type="Pfam" id="PF10672">
    <property type="entry name" value="Methyltrans_SAM"/>
    <property type="match status" value="1"/>
</dbReference>
<dbReference type="Pfam" id="PF22020">
    <property type="entry name" value="RlmL_1st"/>
    <property type="match status" value="1"/>
</dbReference>
<dbReference type="Pfam" id="PF02926">
    <property type="entry name" value="THUMP"/>
    <property type="match status" value="1"/>
</dbReference>
<dbReference type="Pfam" id="PF01170">
    <property type="entry name" value="UPF0020"/>
    <property type="match status" value="1"/>
</dbReference>
<dbReference type="PIRSF" id="PIRSF037618">
    <property type="entry name" value="RNA_Mtase_bacteria_prd"/>
    <property type="match status" value="1"/>
</dbReference>
<dbReference type="SMART" id="SM00981">
    <property type="entry name" value="THUMP"/>
    <property type="match status" value="1"/>
</dbReference>
<dbReference type="SUPFAM" id="SSF53335">
    <property type="entry name" value="S-adenosyl-L-methionine-dependent methyltransferases"/>
    <property type="match status" value="2"/>
</dbReference>
<dbReference type="PROSITE" id="PS51165">
    <property type="entry name" value="THUMP"/>
    <property type="match status" value="1"/>
</dbReference>
<dbReference type="PROSITE" id="PS01261">
    <property type="entry name" value="UPF0020"/>
    <property type="match status" value="1"/>
</dbReference>
<evidence type="ECO:0000255" key="1">
    <source>
        <dbReference type="HAMAP-Rule" id="MF_01858"/>
    </source>
</evidence>
<reference key="1">
    <citation type="journal article" date="2007" name="PLoS ONE">
        <title>Genome sequencing shows that European isolates of Francisella tularensis subspecies tularensis are almost identical to US laboratory strain Schu S4.</title>
        <authorList>
            <person name="Chaudhuri R.R."/>
            <person name="Ren C.-P."/>
            <person name="Desmond L."/>
            <person name="Vincent G.A."/>
            <person name="Silman N.J."/>
            <person name="Brehm J.K."/>
            <person name="Elmore M.J."/>
            <person name="Hudson M.J."/>
            <person name="Forsman M."/>
            <person name="Isherwood K.E."/>
            <person name="Gurycova D."/>
            <person name="Minton N.P."/>
            <person name="Titball R.W."/>
            <person name="Pallen M.J."/>
            <person name="Vipond R."/>
        </authorList>
    </citation>
    <scope>NUCLEOTIDE SEQUENCE [LARGE SCALE GENOMIC DNA]</scope>
    <source>
        <strain>FSC 198</strain>
    </source>
</reference>
<sequence length="717" mass="83483">MQKFTFFVSCAKGIELLLKDELERLGISSQEKLAGVEFEGSIKDAYKVCIYSYLASQVMLKVATDKVINQQDLYEFISSINWMDYFAVDKTFKIIISGKHYDFNNTMFVSQKTKDAIVDQFRNVTNQRPNIDTENPDNVIKLHLHKQFVNVFLCLNIDSLHKRSYRQFQGQAPLKESLAAAILIKAGWLEELKKHQPILIDPMCGSGTILIEAALMAKNIAPVLLNKEFKIFNSKFHNQELWDNLLEIAKNSQKVTNAIICGFDIDNNVLDKAQRNIYQAGVEDVITVKRQDIRDLENEFESEGLIVTNPPYGERLYGDQLDELLDIFNGFGNRLSQDFYGWKVAVLTSFADSIKEMQLRTTERNKFYNGAIETILYQFEINEHAKFKHETQLEKNIRIAEASAQKSDEHIDFANKLKKNLKSLKPWLKQTGLECYRLYDADIPTFAVAVDVYSEHIFLQEYRADATIDQNIAKQRFYQAIYQIHKTLDIKYENIHTRVRQRQKGKEQYQKENDKNKFHIINEFDAKFYVNFDDYLDTGIFLDHRKIRQLVAKAAKNKTLLNLFSYTCTASVHAALKGAKTTSVDMSNTYLEWGKNNFTLNNIDAKKHSFIQADCISWLKTNKDKFDVIFLDPPTFSNSKRMDDILDIQRDHELLINLAMDSLKKDGILYFSNNYRRFKMSPQILEKFNCENIDKICLSRDFLSNKNIHNCWEIKYK</sequence>